<name>ASPC1_HUMAN</name>
<accession>Q9BZE9</accession>
<accession>A8K3K9</accession>
<accession>Q7Z6N7</accession>
<accession>Q8WV59</accession>
<accession>Q96LS5</accession>
<accession>Q96M40</accession>
<comment type="function">
    <text evidence="1 10">Tethering protein that sequesters GLUT4-containing vesicles in the cytoplasm in the absence of insulin. Modulates the amount of GLUT4 that is available at the cell surface (By similarity). Enhances VCP methylation catalyzed by VCPKMT.</text>
</comment>
<comment type="subunit">
    <text evidence="1 9 10">Interacts with GLUT4 (By similarity). Interacts with VCPKMT. Interacts with VCP.</text>
</comment>
<comment type="interaction">
    <interactant intactId="EBI-1993677">
        <id>Q9BZE9</id>
    </interactant>
    <interactant intactId="EBI-10173507">
        <id>Q6UY14-3</id>
        <label>ADAMTSL4</label>
    </interactant>
    <organismsDiffer>false</organismsDiffer>
    <experiments>3</experiments>
</comment>
<comment type="interaction">
    <interactant intactId="EBI-1993677">
        <id>Q9BZE9</id>
    </interactant>
    <interactant intactId="EBI-750020">
        <id>P49760</id>
        <label>CLK2</label>
    </interactant>
    <organismsDiffer>false</organismsDiffer>
    <experiments>3</experiments>
</comment>
<comment type="interaction">
    <interactant intactId="EBI-1993677">
        <id>Q9BZE9</id>
    </interactant>
    <interactant intactId="EBI-6509505">
        <id>Q0VD86</id>
        <label>INCA1</label>
    </interactant>
    <organismsDiffer>false</organismsDiffer>
    <experiments>3</experiments>
</comment>
<comment type="interaction">
    <interactant intactId="EBI-1993677">
        <id>Q9BZE9</id>
    </interactant>
    <interactant intactId="EBI-948001">
        <id>Q15323</id>
        <label>KRT31</label>
    </interactant>
    <organismsDiffer>false</organismsDiffer>
    <experiments>3</experiments>
</comment>
<comment type="interaction">
    <interactant intactId="EBI-1993677">
        <id>Q9BZE9</id>
    </interactant>
    <interactant intactId="EBI-11959885">
        <id>Q07627</id>
        <label>KRTAP1-1</label>
    </interactant>
    <organismsDiffer>false</organismsDiffer>
    <experiments>3</experiments>
</comment>
<comment type="interaction">
    <interactant intactId="EBI-1993677">
        <id>Q9BZE9</id>
    </interactant>
    <interactant intactId="EBI-10171774">
        <id>P60410</id>
        <label>KRTAP10-8</label>
    </interactant>
    <organismsDiffer>false</organismsDiffer>
    <experiments>3</experiments>
</comment>
<comment type="interaction">
    <interactant intactId="EBI-1993677">
        <id>Q9BZE9</id>
    </interactant>
    <interactant intactId="EBI-945833">
        <id>Q7Z3S9</id>
        <label>NOTCH2NLA</label>
    </interactant>
    <organismsDiffer>false</organismsDiffer>
    <experiments>3</experiments>
</comment>
<comment type="interaction">
    <interactant intactId="EBI-1993677">
        <id>Q9BZE9</id>
    </interactant>
    <interactant intactId="EBI-2554984">
        <id>Q9Y6A5</id>
        <label>TACC3</label>
    </interactant>
    <organismsDiffer>false</organismsDiffer>
    <experiments>3</experiments>
</comment>
<comment type="interaction">
    <interactant intactId="EBI-1993677">
        <id>Q9BZE9</id>
    </interactant>
    <interactant intactId="EBI-533224">
        <id>P15884</id>
        <label>TCF4</label>
    </interactant>
    <organismsDiffer>false</organismsDiffer>
    <experiments>3</experiments>
</comment>
<comment type="interaction">
    <interactant intactId="EBI-1993677">
        <id>Q9BZE9</id>
    </interactant>
    <interactant intactId="EBI-355164">
        <id>P55072</id>
        <label>VCP</label>
    </interactant>
    <organismsDiffer>false</organismsDiffer>
    <experiments>34</experiments>
</comment>
<comment type="subcellular location">
    <subcellularLocation>
        <location evidence="1">Endomembrane system</location>
        <topology evidence="1">Peripheral membrane protein</topology>
    </subcellularLocation>
    <subcellularLocation>
        <location evidence="9">Endoplasmic reticulum-Golgi intermediate compartment membrane</location>
        <topology>Peripheral membrane protein</topology>
    </subcellularLocation>
    <subcellularLocation>
        <location evidence="10">Cytoplasm</location>
    </subcellularLocation>
    <subcellularLocation>
        <location evidence="10">Nucleus</location>
    </subcellularLocation>
</comment>
<comment type="alternative products">
    <event type="alternative splicing"/>
    <isoform>
        <id>Q9BZE9-1</id>
        <name>1</name>
        <sequence type="displayed"/>
    </isoform>
    <isoform>
        <id>Q9BZE9-2</id>
        <name>2</name>
        <sequence type="described" ref="VSP_020578"/>
    </isoform>
    <isoform>
        <id>Q9BZE9-3</id>
        <name>3</name>
        <sequence type="described" ref="VSP_020574 VSP_020577"/>
    </isoform>
    <isoform>
        <id>Q9BZE9-4</id>
        <name>4</name>
        <sequence type="described" ref="VSP_020574 VSP_020575 VSP_020576"/>
    </isoform>
</comment>
<comment type="tissue specificity">
    <text evidence="5 6">Ubiquitous. Highly expressed in testis, heart, skeletal muscle and pancreas.</text>
</comment>
<comment type="disease">
    <text evidence="5">A chromosomal aberration involving ASPSCR1 is found in patients with alveolar soft part sarcoma. Translocation t(X;17)(p11;q25) with TFE3 forms a ASPSCR1-TFE3 fusion protein.</text>
</comment>
<comment type="disease">
    <text evidence="6">A chromosomal aberration involving ASPSCR1 has been found in two patients with of papillary renal cell carcinoma. Translocation t(X;17)(p11.2;q25).</text>
</comment>
<comment type="online information" name="Atlas of Genetics and Cytogenetics in Oncology and Haematology">
    <link uri="https://atlasgeneticsoncology.org/gene/358/ASPSCR1"/>
</comment>
<reference key="1">
    <citation type="journal article" date="2001" name="Oncogene">
        <title>The der(17)t(X;17)(p11;q25) of human alveolar soft part sarcoma fuses the TFE3 transcription factor gene to ASPL, a novel gene at 17q25.</title>
        <authorList>
            <person name="Ladanyi M."/>
            <person name="Lui M.Y."/>
            <person name="Antonescu C.R."/>
            <person name="Krause-Boehm A."/>
            <person name="Meindl A."/>
            <person name="Argani P."/>
            <person name="Healey J.H."/>
            <person name="Ueda T."/>
            <person name="Yoshikawa H."/>
            <person name="Meloni-Ehrig A."/>
            <person name="Sorensen P.H.B."/>
            <person name="Mertens F."/>
            <person name="Mandahl N."/>
            <person name="van den Berghe H."/>
            <person name="Sciot R."/>
            <person name="Dal Cin P."/>
            <person name="Bridge J."/>
        </authorList>
    </citation>
    <scope>NUCLEOTIDE SEQUENCE [MRNA] (ISOFORM 1)</scope>
    <scope>CHROMOSOMAL TRANSLOCATION WITH TFE3</scope>
    <scope>TISSUE SPECIFICITY</scope>
    <scope>INVOLVEMENT IN ASPS</scope>
</reference>
<reference key="2">
    <citation type="journal article" date="2004" name="Nat. Genet.">
        <title>Complete sequencing and characterization of 21,243 full-length human cDNAs.</title>
        <authorList>
            <person name="Ota T."/>
            <person name="Suzuki Y."/>
            <person name="Nishikawa T."/>
            <person name="Otsuki T."/>
            <person name="Sugiyama T."/>
            <person name="Irie R."/>
            <person name="Wakamatsu A."/>
            <person name="Hayashi K."/>
            <person name="Sato H."/>
            <person name="Nagai K."/>
            <person name="Kimura K."/>
            <person name="Makita H."/>
            <person name="Sekine M."/>
            <person name="Obayashi M."/>
            <person name="Nishi T."/>
            <person name="Shibahara T."/>
            <person name="Tanaka T."/>
            <person name="Ishii S."/>
            <person name="Yamamoto J."/>
            <person name="Saito K."/>
            <person name="Kawai Y."/>
            <person name="Isono Y."/>
            <person name="Nakamura Y."/>
            <person name="Nagahari K."/>
            <person name="Murakami K."/>
            <person name="Yasuda T."/>
            <person name="Iwayanagi T."/>
            <person name="Wagatsuma M."/>
            <person name="Shiratori A."/>
            <person name="Sudo H."/>
            <person name="Hosoiri T."/>
            <person name="Kaku Y."/>
            <person name="Kodaira H."/>
            <person name="Kondo H."/>
            <person name="Sugawara M."/>
            <person name="Takahashi M."/>
            <person name="Kanda K."/>
            <person name="Yokoi T."/>
            <person name="Furuya T."/>
            <person name="Kikkawa E."/>
            <person name="Omura Y."/>
            <person name="Abe K."/>
            <person name="Kamihara K."/>
            <person name="Katsuta N."/>
            <person name="Sato K."/>
            <person name="Tanikawa M."/>
            <person name="Yamazaki M."/>
            <person name="Ninomiya K."/>
            <person name="Ishibashi T."/>
            <person name="Yamashita H."/>
            <person name="Murakawa K."/>
            <person name="Fujimori K."/>
            <person name="Tanai H."/>
            <person name="Kimata M."/>
            <person name="Watanabe M."/>
            <person name="Hiraoka S."/>
            <person name="Chiba Y."/>
            <person name="Ishida S."/>
            <person name="Ono Y."/>
            <person name="Takiguchi S."/>
            <person name="Watanabe S."/>
            <person name="Yosida M."/>
            <person name="Hotuta T."/>
            <person name="Kusano J."/>
            <person name="Kanehori K."/>
            <person name="Takahashi-Fujii A."/>
            <person name="Hara H."/>
            <person name="Tanase T.-O."/>
            <person name="Nomura Y."/>
            <person name="Togiya S."/>
            <person name="Komai F."/>
            <person name="Hara R."/>
            <person name="Takeuchi K."/>
            <person name="Arita M."/>
            <person name="Imose N."/>
            <person name="Musashino K."/>
            <person name="Yuuki H."/>
            <person name="Oshima A."/>
            <person name="Sasaki N."/>
            <person name="Aotsuka S."/>
            <person name="Yoshikawa Y."/>
            <person name="Matsunawa H."/>
            <person name="Ichihara T."/>
            <person name="Shiohata N."/>
            <person name="Sano S."/>
            <person name="Moriya S."/>
            <person name="Momiyama H."/>
            <person name="Satoh N."/>
            <person name="Takami S."/>
            <person name="Terashima Y."/>
            <person name="Suzuki O."/>
            <person name="Nakagawa S."/>
            <person name="Senoh A."/>
            <person name="Mizoguchi H."/>
            <person name="Goto Y."/>
            <person name="Shimizu F."/>
            <person name="Wakebe H."/>
            <person name="Hishigaki H."/>
            <person name="Watanabe T."/>
            <person name="Sugiyama A."/>
            <person name="Takemoto M."/>
            <person name="Kawakami B."/>
            <person name="Yamazaki M."/>
            <person name="Watanabe K."/>
            <person name="Kumagai A."/>
            <person name="Itakura S."/>
            <person name="Fukuzumi Y."/>
            <person name="Fujimori Y."/>
            <person name="Komiyama M."/>
            <person name="Tashiro H."/>
            <person name="Tanigami A."/>
            <person name="Fujiwara T."/>
            <person name="Ono T."/>
            <person name="Yamada K."/>
            <person name="Fujii Y."/>
            <person name="Ozaki K."/>
            <person name="Hirao M."/>
            <person name="Ohmori Y."/>
            <person name="Kawabata A."/>
            <person name="Hikiji T."/>
            <person name="Kobatake N."/>
            <person name="Inagaki H."/>
            <person name="Ikema Y."/>
            <person name="Okamoto S."/>
            <person name="Okitani R."/>
            <person name="Kawakami T."/>
            <person name="Noguchi S."/>
            <person name="Itoh T."/>
            <person name="Shigeta K."/>
            <person name="Senba T."/>
            <person name="Matsumura K."/>
            <person name="Nakajima Y."/>
            <person name="Mizuno T."/>
            <person name="Morinaga M."/>
            <person name="Sasaki M."/>
            <person name="Togashi T."/>
            <person name="Oyama M."/>
            <person name="Hata H."/>
            <person name="Watanabe M."/>
            <person name="Komatsu T."/>
            <person name="Mizushima-Sugano J."/>
            <person name="Satoh T."/>
            <person name="Shirai Y."/>
            <person name="Takahashi Y."/>
            <person name="Nakagawa K."/>
            <person name="Okumura K."/>
            <person name="Nagase T."/>
            <person name="Nomura N."/>
            <person name="Kikuchi H."/>
            <person name="Masuho Y."/>
            <person name="Yamashita R."/>
            <person name="Nakai K."/>
            <person name="Yada T."/>
            <person name="Nakamura Y."/>
            <person name="Ohara O."/>
            <person name="Isogai T."/>
            <person name="Sugano S."/>
        </authorList>
    </citation>
    <scope>NUCLEOTIDE SEQUENCE [LARGE SCALE MRNA] (ISOFORMS 1; 2 AND 3)</scope>
    <scope>VARIANT GLN-252</scope>
    <source>
        <tissue>Brain</tissue>
        <tissue>Heart</tissue>
        <tissue>Testis</tissue>
    </source>
</reference>
<reference key="3">
    <citation type="journal article" date="2004" name="Genome Res.">
        <title>The status, quality, and expansion of the NIH full-length cDNA project: the Mammalian Gene Collection (MGC).</title>
        <authorList>
            <consortium name="The MGC Project Team"/>
        </authorList>
    </citation>
    <scope>NUCLEOTIDE SEQUENCE [LARGE SCALE MRNA] (ISOFORMS 1 AND 4)</scope>
    <scope>VARIANT GLN-252</scope>
    <source>
        <tissue>Eye</tissue>
        <tissue>Skin</tissue>
    </source>
</reference>
<reference key="4">
    <citation type="journal article" date="2001" name="Cancer Res.">
        <title>Fusion of a novel gene, RCC17, to the TFE3 gene in t(X;17)(p11.2;q25.3)-bearing papillary renal cell carcinomas.</title>
        <authorList>
            <person name="Heimann P."/>
            <person name="El Housni H."/>
            <person name="Ogur G."/>
            <person name="Weterman M.A.J."/>
            <person name="Petty E.M."/>
            <person name="Vassart G."/>
        </authorList>
    </citation>
    <scope>CHROMOSOMAL TRANSLOCATION WITH TFE3</scope>
    <scope>TISSUE SPECIFICITY</scope>
</reference>
<reference key="5">
    <citation type="journal article" date="2009" name="Anal. Chem.">
        <title>Lys-N and trypsin cover complementary parts of the phosphoproteome in a refined SCX-based approach.</title>
        <authorList>
            <person name="Gauci S."/>
            <person name="Helbig A.O."/>
            <person name="Slijper M."/>
            <person name="Krijgsveld J."/>
            <person name="Heck A.J."/>
            <person name="Mohammed S."/>
        </authorList>
    </citation>
    <scope>IDENTIFICATION BY MASS SPECTROMETRY [LARGE SCALE ANALYSIS]</scope>
</reference>
<reference key="6">
    <citation type="journal article" date="2011" name="BMC Syst. Biol.">
        <title>Initial characterization of the human central proteome.</title>
        <authorList>
            <person name="Burkard T.R."/>
            <person name="Planyavsky M."/>
            <person name="Kaupe I."/>
            <person name="Breitwieser F.P."/>
            <person name="Buerckstuemmer T."/>
            <person name="Bennett K.L."/>
            <person name="Superti-Furga G."/>
            <person name="Colinge J."/>
        </authorList>
    </citation>
    <scope>IDENTIFICATION BY MASS SPECTROMETRY [LARGE SCALE ANALYSIS]</scope>
</reference>
<reference key="7">
    <citation type="journal article" date="2011" name="Sci. Signal.">
        <title>System-wide temporal characterization of the proteome and phosphoproteome of human embryonic stem cell differentiation.</title>
        <authorList>
            <person name="Rigbolt K.T."/>
            <person name="Prokhorova T.A."/>
            <person name="Akimov V."/>
            <person name="Henningsen J."/>
            <person name="Johansen P.T."/>
            <person name="Kratchmarova I."/>
            <person name="Kassem M."/>
            <person name="Mann M."/>
            <person name="Olsen J.V."/>
            <person name="Blagoev B."/>
        </authorList>
    </citation>
    <scope>PHOSPHORYLATION [LARGE SCALE ANALYSIS] AT SER-500</scope>
    <scope>IDENTIFICATION BY MASS SPECTROMETRY [LARGE SCALE ANALYSIS]</scope>
</reference>
<reference key="8">
    <citation type="journal article" date="2012" name="J. Biol. Chem.">
        <title>The ubiquitin regulatory X (UBX) domain-containing protein TUG regulates the p97 ATPase and resides at the endoplasmic reticulum-golgi intermediate compartment.</title>
        <authorList>
            <person name="Orme C.M."/>
            <person name="Bogan J.S."/>
        </authorList>
    </citation>
    <scope>SUBCELLULAR LOCATION</scope>
    <scope>INTERACTION WITH VCP</scope>
</reference>
<reference key="9">
    <citation type="journal article" date="2012" name="Mol. Cell. Proteomics">
        <title>Comparative large-scale characterisation of plant vs. mammal proteins reveals similar and idiosyncratic N-alpha acetylation features.</title>
        <authorList>
            <person name="Bienvenut W.V."/>
            <person name="Sumpton D."/>
            <person name="Martinez A."/>
            <person name="Lilla S."/>
            <person name="Espagne C."/>
            <person name="Meinnel T."/>
            <person name="Giglione C."/>
        </authorList>
    </citation>
    <scope>ACETYLATION [LARGE SCALE ANALYSIS] AT ALA-2</scope>
    <scope>CLEAVAGE OF INITIATOR METHIONINE [LARGE SCALE ANALYSIS]</scope>
    <scope>IDENTIFICATION BY MASS SPECTROMETRY [LARGE SCALE ANALYSIS]</scope>
</reference>
<reference key="10">
    <citation type="journal article" date="2012" name="Proc. Natl. Acad. Sci. U.S.A.">
        <title>N-terminal acetylome analyses and functional insights of the N-terminal acetyltransferase NatB.</title>
        <authorList>
            <person name="Van Damme P."/>
            <person name="Lasa M."/>
            <person name="Polevoda B."/>
            <person name="Gazquez C."/>
            <person name="Elosegui-Artola A."/>
            <person name="Kim D.S."/>
            <person name="De Juan-Pardo E."/>
            <person name="Demeyer K."/>
            <person name="Hole K."/>
            <person name="Larrea E."/>
            <person name="Timmerman E."/>
            <person name="Prieto J."/>
            <person name="Arnesen T."/>
            <person name="Sherman F."/>
            <person name="Gevaert K."/>
            <person name="Aldabe R."/>
        </authorList>
    </citation>
    <scope>ACETYLATION [LARGE SCALE ANALYSIS] AT ALA-2</scope>
    <scope>CLEAVAGE OF INITIATOR METHIONINE [LARGE SCALE ANALYSIS]</scope>
    <scope>IDENTIFICATION BY MASS SPECTROMETRY [LARGE SCALE ANALYSIS]</scope>
</reference>
<reference key="11">
    <citation type="journal article" date="2013" name="J. Proteome Res.">
        <title>Toward a comprehensive characterization of a human cancer cell phosphoproteome.</title>
        <authorList>
            <person name="Zhou H."/>
            <person name="Di Palma S."/>
            <person name="Preisinger C."/>
            <person name="Peng M."/>
            <person name="Polat A.N."/>
            <person name="Heck A.J."/>
            <person name="Mohammed S."/>
        </authorList>
    </citation>
    <scope>PHOSPHORYLATION [LARGE SCALE ANALYSIS] AT SER-275; SER-500 AND SER-502</scope>
    <scope>IDENTIFICATION BY MASS SPECTROMETRY [LARGE SCALE ANALYSIS]</scope>
    <source>
        <tissue>Cervix carcinoma</tissue>
        <tissue>Erythroleukemia</tissue>
    </source>
</reference>
<reference key="12">
    <citation type="journal article" date="2013" name="PLoS Genet.">
        <title>A newly uncovered group of distantly related lysine methyltransferases preferentially interact with molecular chaperones to regulate their activity.</title>
        <authorList>
            <person name="Cloutier P."/>
            <person name="Lavallee-Adam M."/>
            <person name="Faubert D."/>
            <person name="Blanchette M."/>
            <person name="Coulombe B."/>
        </authorList>
    </citation>
    <scope>FUNCTION IN VCP METHYLATION</scope>
    <scope>INTERACTION WITH VCPKMT</scope>
    <scope>SUBCELLULAR LOCATION</scope>
</reference>
<reference key="13">
    <citation type="journal article" date="2014" name="J. Proteomics">
        <title>An enzyme assisted RP-RPLC approach for in-depth analysis of human liver phosphoproteome.</title>
        <authorList>
            <person name="Bian Y."/>
            <person name="Song C."/>
            <person name="Cheng K."/>
            <person name="Dong M."/>
            <person name="Wang F."/>
            <person name="Huang J."/>
            <person name="Sun D."/>
            <person name="Wang L."/>
            <person name="Ye M."/>
            <person name="Zou H."/>
        </authorList>
    </citation>
    <scope>PHOSPHORYLATION [LARGE SCALE ANALYSIS] AT SER-275; SER-500 AND SER-502</scope>
    <scope>IDENTIFICATION BY MASS SPECTROMETRY [LARGE SCALE ANALYSIS]</scope>
    <source>
        <tissue>Liver</tissue>
    </source>
</reference>
<dbReference type="EMBL" id="AF324219">
    <property type="protein sequence ID" value="AAK08959.2"/>
    <property type="molecule type" value="mRNA"/>
</dbReference>
<dbReference type="EMBL" id="AK057403">
    <property type="protein sequence ID" value="BAB71472.1"/>
    <property type="molecule type" value="mRNA"/>
</dbReference>
<dbReference type="EMBL" id="AK057851">
    <property type="protein sequence ID" value="BAB71595.1"/>
    <property type="molecule type" value="mRNA"/>
</dbReference>
<dbReference type="EMBL" id="AK290624">
    <property type="protein sequence ID" value="BAF83313.1"/>
    <property type="molecule type" value="mRNA"/>
</dbReference>
<dbReference type="EMBL" id="BC006152">
    <property type="protein sequence ID" value="AAH06152.1"/>
    <property type="molecule type" value="mRNA"/>
</dbReference>
<dbReference type="EMBL" id="BC018722">
    <property type="protein sequence ID" value="AAH18722.1"/>
    <property type="molecule type" value="mRNA"/>
</dbReference>
<dbReference type="CCDS" id="CCDS11796.1">
    <molecule id="Q9BZE9-1"/>
</dbReference>
<dbReference type="CCDS" id="CCDS58611.1">
    <molecule id="Q9BZE9-2"/>
</dbReference>
<dbReference type="CCDS" id="CCDS82222.1">
    <molecule id="Q9BZE9-3"/>
</dbReference>
<dbReference type="RefSeq" id="NP_001238817.1">
    <molecule id="Q9BZE9-2"/>
    <property type="nucleotide sequence ID" value="NM_001251888.2"/>
</dbReference>
<dbReference type="RefSeq" id="NP_001317457.1">
    <molecule id="Q9BZE9-3"/>
    <property type="nucleotide sequence ID" value="NM_001330528.2"/>
</dbReference>
<dbReference type="RefSeq" id="NP_076988.1">
    <molecule id="Q9BZE9-1"/>
    <property type="nucleotide sequence ID" value="NM_024083.4"/>
</dbReference>
<dbReference type="PDB" id="5IFS">
    <property type="method" value="X-ray"/>
    <property type="resolution" value="2.46 A"/>
    <property type="chains" value="A/C=317-553"/>
</dbReference>
<dbReference type="PDB" id="5IFW">
    <property type="method" value="X-ray"/>
    <property type="resolution" value="3.40 A"/>
    <property type="chains" value="A=317-504"/>
</dbReference>
<dbReference type="PDB" id="7OAT">
    <property type="method" value="X-ray"/>
    <property type="resolution" value="3.00 A"/>
    <property type="chains" value="A=313-500"/>
</dbReference>
<dbReference type="PDBsum" id="5IFS"/>
<dbReference type="PDBsum" id="5IFW"/>
<dbReference type="PDBsum" id="7OAT"/>
<dbReference type="SMR" id="Q9BZE9"/>
<dbReference type="BioGRID" id="122516">
    <property type="interactions" value="80"/>
</dbReference>
<dbReference type="FunCoup" id="Q9BZE9">
    <property type="interactions" value="2253"/>
</dbReference>
<dbReference type="IntAct" id="Q9BZE9">
    <property type="interactions" value="51"/>
</dbReference>
<dbReference type="MINT" id="Q9BZE9"/>
<dbReference type="STRING" id="9606.ENSP00000306625"/>
<dbReference type="GlyCosmos" id="Q9BZE9">
    <property type="glycosylation" value="2 sites, 1 glycan"/>
</dbReference>
<dbReference type="GlyGen" id="Q9BZE9">
    <property type="glycosylation" value="6 sites, 1 O-linked glycan (3 sites)"/>
</dbReference>
<dbReference type="iPTMnet" id="Q9BZE9"/>
<dbReference type="PhosphoSitePlus" id="Q9BZE9"/>
<dbReference type="BioMuta" id="ASPSCR1"/>
<dbReference type="DMDM" id="74717746"/>
<dbReference type="jPOST" id="Q9BZE9"/>
<dbReference type="MassIVE" id="Q9BZE9"/>
<dbReference type="PeptideAtlas" id="Q9BZE9"/>
<dbReference type="ProteomicsDB" id="79824">
    <molecule id="Q9BZE9-1"/>
</dbReference>
<dbReference type="ProteomicsDB" id="79825">
    <molecule id="Q9BZE9-2"/>
</dbReference>
<dbReference type="ProteomicsDB" id="79826">
    <molecule id="Q9BZE9-3"/>
</dbReference>
<dbReference type="ProteomicsDB" id="79827">
    <molecule id="Q9BZE9-4"/>
</dbReference>
<dbReference type="Pumba" id="Q9BZE9"/>
<dbReference type="Antibodypedia" id="19857">
    <property type="antibodies" value="302 antibodies from 30 providers"/>
</dbReference>
<dbReference type="DNASU" id="79058"/>
<dbReference type="Ensembl" id="ENST00000306729.11">
    <molecule id="Q9BZE9-2"/>
    <property type="protein sequence ID" value="ENSP00000306625.7"/>
    <property type="gene ID" value="ENSG00000169696.16"/>
</dbReference>
<dbReference type="Ensembl" id="ENST00000306739.9">
    <molecule id="Q9BZE9-1"/>
    <property type="protein sequence ID" value="ENSP00000302176.4"/>
    <property type="gene ID" value="ENSG00000169696.16"/>
</dbReference>
<dbReference type="Ensembl" id="ENST00000580534.5">
    <molecule id="Q9BZE9-3"/>
    <property type="protein sequence ID" value="ENSP00000462329.1"/>
    <property type="gene ID" value="ENSG00000169696.16"/>
</dbReference>
<dbReference type="GeneID" id="79058"/>
<dbReference type="KEGG" id="hsa:79058"/>
<dbReference type="MANE-Select" id="ENST00000306739.9">
    <property type="protein sequence ID" value="ENSP00000302176.4"/>
    <property type="RefSeq nucleotide sequence ID" value="NM_024083.4"/>
    <property type="RefSeq protein sequence ID" value="NP_076988.1"/>
</dbReference>
<dbReference type="UCSC" id="uc002kcx.3">
    <molecule id="Q9BZE9-1"/>
    <property type="organism name" value="human"/>
</dbReference>
<dbReference type="AGR" id="HGNC:13825"/>
<dbReference type="CTD" id="79058"/>
<dbReference type="DisGeNET" id="79058"/>
<dbReference type="GeneCards" id="ASPSCR1"/>
<dbReference type="HGNC" id="HGNC:13825">
    <property type="gene designation" value="ASPSCR1"/>
</dbReference>
<dbReference type="HPA" id="ENSG00000169696">
    <property type="expression patterns" value="Low tissue specificity"/>
</dbReference>
<dbReference type="MalaCards" id="ASPSCR1"/>
<dbReference type="MIM" id="606236">
    <property type="type" value="gene"/>
</dbReference>
<dbReference type="neXtProt" id="NX_Q9BZE9"/>
<dbReference type="OpenTargets" id="ENSG00000169696"/>
<dbReference type="Orphanet" id="163699">
    <property type="disease" value="Alveolar soft tissue sarcoma"/>
</dbReference>
<dbReference type="Orphanet" id="319308">
    <property type="disease" value="MiT family translocation renal cell carcinoma"/>
</dbReference>
<dbReference type="PharmGKB" id="PA25058"/>
<dbReference type="VEuPathDB" id="HostDB:ENSG00000169696"/>
<dbReference type="eggNOG" id="KOG2699">
    <property type="taxonomic scope" value="Eukaryota"/>
</dbReference>
<dbReference type="GeneTree" id="ENSGT00940000156853"/>
<dbReference type="HOGENOM" id="CLU_025227_0_0_1"/>
<dbReference type="InParanoid" id="Q9BZE9"/>
<dbReference type="OMA" id="ICPNSRR"/>
<dbReference type="OrthoDB" id="440781at2759"/>
<dbReference type="PAN-GO" id="Q9BZE9">
    <property type="GO annotations" value="5 GO annotations based on evolutionary models"/>
</dbReference>
<dbReference type="PhylomeDB" id="Q9BZE9"/>
<dbReference type="TreeFam" id="TF320363"/>
<dbReference type="PathwayCommons" id="Q9BZE9"/>
<dbReference type="Reactome" id="R-HSA-1445148">
    <property type="pathway name" value="Translocation of SLC2A4 (GLUT4) to the plasma membrane"/>
</dbReference>
<dbReference type="SignaLink" id="Q9BZE9"/>
<dbReference type="SIGNOR" id="Q9BZE9"/>
<dbReference type="BioGRID-ORCS" id="79058">
    <property type="hits" value="24 hits in 1154 CRISPR screens"/>
</dbReference>
<dbReference type="ChiTaRS" id="ASPSCR1">
    <property type="organism name" value="human"/>
</dbReference>
<dbReference type="GeneWiki" id="ASPSCR1"/>
<dbReference type="GenomeRNAi" id="79058"/>
<dbReference type="Pharos" id="Q9BZE9">
    <property type="development level" value="Tbio"/>
</dbReference>
<dbReference type="PRO" id="PR:Q9BZE9"/>
<dbReference type="Proteomes" id="UP000005640">
    <property type="component" value="Chromosome 17"/>
</dbReference>
<dbReference type="RNAct" id="Q9BZE9">
    <property type="molecule type" value="protein"/>
</dbReference>
<dbReference type="Bgee" id="ENSG00000169696">
    <property type="expression patterns" value="Expressed in right lobe of liver and 143 other cell types or tissues"/>
</dbReference>
<dbReference type="ExpressionAtlas" id="Q9BZE9">
    <property type="expression patterns" value="baseline and differential"/>
</dbReference>
<dbReference type="GO" id="GO:0005737">
    <property type="term" value="C:cytoplasm"/>
    <property type="evidence" value="ECO:0000318"/>
    <property type="project" value="GO_Central"/>
</dbReference>
<dbReference type="GO" id="GO:0009898">
    <property type="term" value="C:cytoplasmic side of plasma membrane"/>
    <property type="evidence" value="ECO:0007669"/>
    <property type="project" value="Ensembl"/>
</dbReference>
<dbReference type="GO" id="GO:0005829">
    <property type="term" value="C:cytosol"/>
    <property type="evidence" value="ECO:0007669"/>
    <property type="project" value="Ensembl"/>
</dbReference>
<dbReference type="GO" id="GO:0012505">
    <property type="term" value="C:endomembrane system"/>
    <property type="evidence" value="ECO:0007669"/>
    <property type="project" value="UniProtKB-SubCell"/>
</dbReference>
<dbReference type="GO" id="GO:0033116">
    <property type="term" value="C:endoplasmic reticulum-Golgi intermediate compartment membrane"/>
    <property type="evidence" value="ECO:0007669"/>
    <property type="project" value="UniProtKB-SubCell"/>
</dbReference>
<dbReference type="GO" id="GO:0043231">
    <property type="term" value="C:intracellular membrane-bounded organelle"/>
    <property type="evidence" value="ECO:0000314"/>
    <property type="project" value="HPA"/>
</dbReference>
<dbReference type="GO" id="GO:0005654">
    <property type="term" value="C:nucleoplasm"/>
    <property type="evidence" value="ECO:0000314"/>
    <property type="project" value="HPA"/>
</dbReference>
<dbReference type="GO" id="GO:0005634">
    <property type="term" value="C:nucleus"/>
    <property type="evidence" value="ECO:0000318"/>
    <property type="project" value="GO_Central"/>
</dbReference>
<dbReference type="GO" id="GO:0048471">
    <property type="term" value="C:perinuclear region of cytoplasm"/>
    <property type="evidence" value="ECO:0007669"/>
    <property type="project" value="Ensembl"/>
</dbReference>
<dbReference type="GO" id="GO:0005886">
    <property type="term" value="C:plasma membrane"/>
    <property type="evidence" value="ECO:0000314"/>
    <property type="project" value="HPA"/>
</dbReference>
<dbReference type="GO" id="GO:0012506">
    <property type="term" value="C:vesicle membrane"/>
    <property type="evidence" value="ECO:0000318"/>
    <property type="project" value="GO_Central"/>
</dbReference>
<dbReference type="GO" id="GO:0042593">
    <property type="term" value="P:glucose homeostasis"/>
    <property type="evidence" value="ECO:0000318"/>
    <property type="project" value="GO_Central"/>
</dbReference>
<dbReference type="GO" id="GO:0006886">
    <property type="term" value="P:intracellular protein transport"/>
    <property type="evidence" value="ECO:0000318"/>
    <property type="project" value="GO_Central"/>
</dbReference>
<dbReference type="GO" id="GO:0031401">
    <property type="term" value="P:positive regulation of protein modification process"/>
    <property type="evidence" value="ECO:0000315"/>
    <property type="project" value="UniProtKB"/>
</dbReference>
<dbReference type="GO" id="GO:0046324">
    <property type="term" value="P:regulation of D-glucose import"/>
    <property type="evidence" value="ECO:0007669"/>
    <property type="project" value="Ensembl"/>
</dbReference>
<dbReference type="CDD" id="cd16105">
    <property type="entry name" value="Ubl_ASPSCR1_like"/>
    <property type="match status" value="1"/>
</dbReference>
<dbReference type="CDD" id="cd17075">
    <property type="entry name" value="UBX1_UBXN9"/>
    <property type="match status" value="1"/>
</dbReference>
<dbReference type="CDD" id="cd16118">
    <property type="entry name" value="UBX2_UBXN9"/>
    <property type="match status" value="1"/>
</dbReference>
<dbReference type="FunFam" id="3.10.20.90:FF:000274">
    <property type="entry name" value="Tether containing UBX domain for GLUT4"/>
    <property type="match status" value="1"/>
</dbReference>
<dbReference type="FunFam" id="3.10.20.90:FF:000204">
    <property type="entry name" value="tether containing UBX domain for GLUT4"/>
    <property type="match status" value="1"/>
</dbReference>
<dbReference type="Gene3D" id="3.10.20.90">
    <property type="entry name" value="Phosphatidylinositol 3-kinase Catalytic Subunit, Chain A, domain 1"/>
    <property type="match status" value="2"/>
</dbReference>
<dbReference type="InterPro" id="IPR021569">
    <property type="entry name" value="TUG-UBL1"/>
</dbReference>
<dbReference type="InterPro" id="IPR029071">
    <property type="entry name" value="Ubiquitin-like_domsf"/>
</dbReference>
<dbReference type="InterPro" id="IPR001012">
    <property type="entry name" value="UBX_dom"/>
</dbReference>
<dbReference type="PANTHER" id="PTHR46467">
    <property type="entry name" value="TETHER CONTAINING UBX DOMAIN FOR GLUT4"/>
    <property type="match status" value="1"/>
</dbReference>
<dbReference type="PANTHER" id="PTHR46467:SF1">
    <property type="entry name" value="TETHER CONTAINING UBX DOMAIN FOR GLUT4"/>
    <property type="match status" value="1"/>
</dbReference>
<dbReference type="Pfam" id="PF11470">
    <property type="entry name" value="TUG-UBL1"/>
    <property type="match status" value="1"/>
</dbReference>
<dbReference type="Pfam" id="PF00789">
    <property type="entry name" value="UBX"/>
    <property type="match status" value="1"/>
</dbReference>
<dbReference type="SUPFAM" id="SSF54236">
    <property type="entry name" value="Ubiquitin-like"/>
    <property type="match status" value="2"/>
</dbReference>
<dbReference type="PROSITE" id="PS50033">
    <property type="entry name" value="UBX"/>
    <property type="match status" value="1"/>
</dbReference>
<proteinExistence type="evidence at protein level"/>
<organism>
    <name type="scientific">Homo sapiens</name>
    <name type="common">Human</name>
    <dbReference type="NCBI Taxonomy" id="9606"/>
    <lineage>
        <taxon>Eukaryota</taxon>
        <taxon>Metazoa</taxon>
        <taxon>Chordata</taxon>
        <taxon>Craniata</taxon>
        <taxon>Vertebrata</taxon>
        <taxon>Euteleostomi</taxon>
        <taxon>Mammalia</taxon>
        <taxon>Eutheria</taxon>
        <taxon>Euarchontoglires</taxon>
        <taxon>Primates</taxon>
        <taxon>Haplorrhini</taxon>
        <taxon>Catarrhini</taxon>
        <taxon>Hominidae</taxon>
        <taxon>Homo</taxon>
    </lineage>
</organism>
<keyword id="KW-0002">3D-structure</keyword>
<keyword id="KW-0007">Acetylation</keyword>
<keyword id="KW-0025">Alternative splicing</keyword>
<keyword id="KW-0160">Chromosomal rearrangement</keyword>
<keyword id="KW-0963">Cytoplasm</keyword>
<keyword id="KW-0472">Membrane</keyword>
<keyword id="KW-0539">Nucleus</keyword>
<keyword id="KW-0597">Phosphoprotein</keyword>
<keyword id="KW-1267">Proteomics identification</keyword>
<keyword id="KW-0656">Proto-oncogene</keyword>
<keyword id="KW-1185">Reference proteome</keyword>
<sequence>MAAPAGGGGSAVSVLAPNGRRHTVKVTPSTVLLQVLEDTCRRQDFNPCEYDLKFQRSVLDLSLQWRFANLPNNAKLEMVPASRSREGPENMVRIALQLDDGSRLQDSFCSGQTLWELLSHFPQIRECLQHPGGATPVCVYTRDEVTGEAALRGTTLQSLGLTGGSATIRFVMKCYDPVGKTPGSLGSSASAGQAAASAPLPLESGELSRGDLSRPEDADTSGPCCEHTQEKQSTRAPAAAPFVPFSGGGQRLGGPPGPTRPLTSSSAKLPKSLSSPGGPSKPKKSKSGQDPQQEQEQERERDPQQEQERERPVDREPVDREPVVCHPDLEERLQAWPAELPDEFFELTVDDVRRRLAQLKSERKRLEEAPLVTKAFREAQIKEKLERYPKVALRVLFPDRYVLQGFFRPSETVGDLRDFVRSHLGNPELSFYLFITPPKTVLDDHTQTLFQANLFPAALVHLGAEEPAGVYLEPGLLEHAISPSAADVLVARYMSRAAGSPSPLPAPDPAPKSEPAAEEGALVPPEPIPGTAQPVKRSLGKVPKWLKLPASKR</sequence>
<protein>
    <recommendedName>
        <fullName>Tether containing UBX domain for GLUT4</fullName>
    </recommendedName>
    <alternativeName>
        <fullName>Alveolar soft part sarcoma chromosomal region candidate gene 1 protein</fullName>
    </alternativeName>
    <alternativeName>
        <fullName>Alveolar soft part sarcoma locus</fullName>
    </alternativeName>
    <alternativeName>
        <fullName>Renal papillary cell carcinoma protein 17</fullName>
    </alternativeName>
    <alternativeName>
        <fullName>UBX domain-containing protein 9</fullName>
    </alternativeName>
</protein>
<evidence type="ECO:0000250" key="1"/>
<evidence type="ECO:0000250" key="2">
    <source>
        <dbReference type="UniProtKB" id="Q8VBT9"/>
    </source>
</evidence>
<evidence type="ECO:0000255" key="3">
    <source>
        <dbReference type="PROSITE-ProRule" id="PRU00215"/>
    </source>
</evidence>
<evidence type="ECO:0000256" key="4">
    <source>
        <dbReference type="SAM" id="MobiDB-lite"/>
    </source>
</evidence>
<evidence type="ECO:0000269" key="5">
    <source>
    </source>
</evidence>
<evidence type="ECO:0000269" key="6">
    <source>
    </source>
</evidence>
<evidence type="ECO:0000269" key="7">
    <source>
    </source>
</evidence>
<evidence type="ECO:0000269" key="8">
    <source>
    </source>
</evidence>
<evidence type="ECO:0000269" key="9">
    <source>
    </source>
</evidence>
<evidence type="ECO:0000269" key="10">
    <source>
    </source>
</evidence>
<evidence type="ECO:0000303" key="11">
    <source>
    </source>
</evidence>
<evidence type="ECO:0000303" key="12">
    <source>
    </source>
</evidence>
<evidence type="ECO:0000305" key="13"/>
<evidence type="ECO:0007744" key="14">
    <source>
    </source>
</evidence>
<evidence type="ECO:0007744" key="15">
    <source>
    </source>
</evidence>
<evidence type="ECO:0007744" key="16">
    <source>
    </source>
</evidence>
<evidence type="ECO:0007744" key="17">
    <source>
    </source>
</evidence>
<evidence type="ECO:0007744" key="18">
    <source>
    </source>
</evidence>
<evidence type="ECO:0007829" key="19">
    <source>
        <dbReference type="PDB" id="5IFS"/>
    </source>
</evidence>
<evidence type="ECO:0007829" key="20">
    <source>
        <dbReference type="PDB" id="5IFW"/>
    </source>
</evidence>
<feature type="initiator methionine" description="Removed" evidence="15 16">
    <location>
        <position position="1"/>
    </location>
</feature>
<feature type="chain" id="PRO_0000249885" description="Tether containing UBX domain for GLUT4">
    <location>
        <begin position="2"/>
        <end position="553"/>
    </location>
</feature>
<feature type="domain" description="UBX" evidence="3">
    <location>
        <begin position="386"/>
        <end position="462"/>
    </location>
</feature>
<feature type="region of interest" description="Disordered" evidence="4">
    <location>
        <begin position="182"/>
        <end position="324"/>
    </location>
</feature>
<feature type="region of interest" description="Interaction with GLUT4" evidence="1">
    <location>
        <begin position="317"/>
        <end position="380"/>
    </location>
</feature>
<feature type="region of interest" description="Disordered" evidence="4">
    <location>
        <begin position="499"/>
        <end position="536"/>
    </location>
</feature>
<feature type="compositionally biased region" description="Low complexity" evidence="4">
    <location>
        <begin position="182"/>
        <end position="202"/>
    </location>
</feature>
<feature type="compositionally biased region" description="Basic and acidic residues" evidence="4">
    <location>
        <begin position="206"/>
        <end position="217"/>
    </location>
</feature>
<feature type="compositionally biased region" description="Low complexity" evidence="4">
    <location>
        <begin position="260"/>
        <end position="280"/>
    </location>
</feature>
<feature type="compositionally biased region" description="Basic and acidic residues" evidence="4">
    <location>
        <begin position="296"/>
        <end position="324"/>
    </location>
</feature>
<feature type="compositionally biased region" description="Pro residues" evidence="4">
    <location>
        <begin position="502"/>
        <end position="512"/>
    </location>
</feature>
<feature type="site" description="Breakpoint for translocation to form ASPSCR1-TFE3">
    <location>
        <begin position="311"/>
        <end position="312"/>
    </location>
</feature>
<feature type="modified residue" description="N-acetylalanine" evidence="15 16">
    <location>
        <position position="2"/>
    </location>
</feature>
<feature type="modified residue" description="Phosphoserine" evidence="2">
    <location>
        <position position="184"/>
    </location>
</feature>
<feature type="modified residue" description="Phosphoserine" evidence="17 18">
    <location>
        <position position="275"/>
    </location>
</feature>
<feature type="modified residue" description="Phosphoserine" evidence="14 17 18">
    <location>
        <position position="500"/>
    </location>
</feature>
<feature type="modified residue" description="Phosphoserine" evidence="17 18">
    <location>
        <position position="502"/>
    </location>
</feature>
<feature type="splice variant" id="VSP_020574" description="In isoform 3 and isoform 4." evidence="11 12">
    <location>
        <begin position="1"/>
        <end position="77"/>
    </location>
</feature>
<feature type="splice variant" id="VSP_020575" description="In isoform 4." evidence="12">
    <original>KVALRVLFPDRYVLQGFFRPSETVGDLRDFVRSHLG</original>
    <variation>RRSLSLSPRLESVVPSQLTASSASRVQVVLLPQPPK</variation>
    <location>
        <begin position="390"/>
        <end position="425"/>
    </location>
</feature>
<feature type="splice variant" id="VSP_020576" description="In isoform 4." evidence="12">
    <location>
        <begin position="426"/>
        <end position="553"/>
    </location>
</feature>
<feature type="splice variant" id="VSP_020577" description="In isoform 3." evidence="11">
    <original>F</original>
    <variation>CLSSFGRMDGRGPRCFLTRRCLLSSV</variation>
    <location>
        <position position="434"/>
    </location>
</feature>
<feature type="splice variant" id="VSP_020578" description="In isoform 2." evidence="11">
    <original>Q</original>
    <variation>QPQLGDRVAPFTLGPSLKRCLGPEQRTRLPVVGDGGDVDSGRLLFWGPSRGRASPSTGQPPCHPVCRPSSPPSPRPSSGDPSRVKAGHKHVGTGR</variation>
    <location>
        <position position="451"/>
    </location>
</feature>
<feature type="sequence variant" id="VAR_027503" description="In dbSNP:rs8074498." evidence="7 8">
    <original>L</original>
    <variation>Q</variation>
    <location>
        <position position="252"/>
    </location>
</feature>
<feature type="sequence variant" id="VAR_034745" description="In dbSNP:rs34085048.">
    <original>V</original>
    <variation>M</variation>
    <location>
        <position position="318"/>
    </location>
</feature>
<feature type="sequence variant" id="VAR_027504" description="In dbSNP:rs13087.">
    <original>D</original>
    <variation>E</variation>
    <location>
        <position position="487"/>
    </location>
</feature>
<feature type="sequence conflict" description="In Ref. 2; BAB71595." evidence="13" ref="2">
    <original>G</original>
    <variation>E</variation>
    <location>
        <position position="257"/>
    </location>
</feature>
<feature type="sequence conflict" description="In Ref. 2; BAB71595." evidence="13" ref="2">
    <original>D</original>
    <variation>G</variation>
    <location>
        <position position="444"/>
    </location>
</feature>
<feature type="strand" evidence="19">
    <location>
        <begin position="323"/>
        <end position="325"/>
    </location>
</feature>
<feature type="helix" evidence="19">
    <location>
        <begin position="327"/>
        <end position="329"/>
    </location>
</feature>
<feature type="helix" evidence="19">
    <location>
        <begin position="342"/>
        <end position="345"/>
    </location>
</feature>
<feature type="helix" evidence="19">
    <location>
        <begin position="349"/>
        <end position="368"/>
    </location>
</feature>
<feature type="helix" evidence="19">
    <location>
        <begin position="374"/>
        <end position="387"/>
    </location>
</feature>
<feature type="strand" evidence="19">
    <location>
        <begin position="391"/>
        <end position="396"/>
    </location>
</feature>
<feature type="strand" evidence="19">
    <location>
        <begin position="402"/>
        <end position="407"/>
    </location>
</feature>
<feature type="helix" evidence="19">
    <location>
        <begin position="413"/>
        <end position="422"/>
    </location>
</feature>
<feature type="strand" evidence="19">
    <location>
        <begin position="424"/>
        <end position="426"/>
    </location>
</feature>
<feature type="strand" evidence="19">
    <location>
        <begin position="432"/>
        <end position="435"/>
    </location>
</feature>
<feature type="turn" evidence="19">
    <location>
        <begin position="436"/>
        <end position="439"/>
    </location>
</feature>
<feature type="strand" evidence="20">
    <location>
        <begin position="445"/>
        <end position="448"/>
    </location>
</feature>
<feature type="turn" evidence="19">
    <location>
        <begin position="449"/>
        <end position="453"/>
    </location>
</feature>
<feature type="strand" evidence="19">
    <location>
        <begin position="456"/>
        <end position="463"/>
    </location>
</feature>
<feature type="helix" evidence="20">
    <location>
        <begin position="467"/>
        <end position="469"/>
    </location>
</feature>
<feature type="helix" evidence="19">
    <location>
        <begin position="474"/>
        <end position="477"/>
    </location>
</feature>
<feature type="helix" evidence="19">
    <location>
        <begin position="483"/>
        <end position="494"/>
    </location>
</feature>
<gene>
    <name type="primary">ASPSCR1</name>
    <name type="synonym">ASPL</name>
    <name type="synonym">RCC17</name>
    <name type="synonym">TUG</name>
    <name type="synonym">UBXD9</name>
    <name type="synonym">UBXN9</name>
</gene>